<evidence type="ECO:0000250" key="1"/>
<evidence type="ECO:0000250" key="2">
    <source>
        <dbReference type="UniProtKB" id="O46469"/>
    </source>
</evidence>
<evidence type="ECO:0000255" key="3">
    <source>
        <dbReference type="PROSITE-ProRule" id="PRU00066"/>
    </source>
</evidence>
<evidence type="ECO:0000255" key="4">
    <source>
        <dbReference type="PROSITE-ProRule" id="PRU00171"/>
    </source>
</evidence>
<evidence type="ECO:0000256" key="5">
    <source>
        <dbReference type="SAM" id="MobiDB-lite"/>
    </source>
</evidence>
<evidence type="ECO:0000269" key="6">
    <source>
    </source>
</evidence>
<evidence type="ECO:0000269" key="7">
    <source>
    </source>
</evidence>
<evidence type="ECO:0000303" key="8">
    <source>
    </source>
</evidence>
<evidence type="ECO:0000303" key="9">
    <source>
    </source>
</evidence>
<evidence type="ECO:0000303" key="10">
    <source ref="3"/>
</evidence>
<evidence type="ECO:0000305" key="11"/>
<proteinExistence type="evidence at protein level"/>
<gene>
    <name type="primary">RGS9</name>
</gene>
<feature type="chain" id="PRO_0000204203" description="Regulator of G-protein signaling 9">
    <location>
        <begin position="1"/>
        <end position="674"/>
    </location>
</feature>
<feature type="domain" description="DEP" evidence="3">
    <location>
        <begin position="30"/>
        <end position="105"/>
    </location>
</feature>
<feature type="domain" description="G protein gamma">
    <location>
        <begin position="219"/>
        <end position="280"/>
    </location>
</feature>
<feature type="domain" description="RGS" evidence="4">
    <location>
        <begin position="298"/>
        <end position="413"/>
    </location>
</feature>
<feature type="region of interest" description="Disordered" evidence="5">
    <location>
        <begin position="533"/>
        <end position="573"/>
    </location>
</feature>
<feature type="compositionally biased region" description="Polar residues" evidence="5">
    <location>
        <begin position="553"/>
        <end position="565"/>
    </location>
</feature>
<feature type="splice variant" id="VSP_005674" description="In isoform 4." evidence="10">
    <location>
        <begin position="1"/>
        <end position="229"/>
    </location>
</feature>
<feature type="splice variant" id="VSP_038381" description="In isoform 3 and isoform 5." evidence="8 10">
    <location>
        <begin position="216"/>
        <end position="218"/>
    </location>
</feature>
<feature type="splice variant" id="VSP_005675" description="In isoform 2." evidence="9">
    <location>
        <begin position="470"/>
        <end position="674"/>
    </location>
</feature>
<feature type="splice variant" id="VSP_038382" description="In isoform 3." evidence="11">
    <original>PGQHMAPSPHLTVYTGTC</original>
    <variation>VMSKLDRRSQLKKELPPK</variation>
    <location>
        <begin position="470"/>
        <end position="487"/>
    </location>
</feature>
<feature type="splice variant" id="VSP_038383" description="In isoform 3." evidence="11">
    <location>
        <begin position="488"/>
        <end position="674"/>
    </location>
</feature>
<feature type="sequence variant" id="VAR_051796" description="In dbSNP:rs12452285.">
    <original>S</original>
    <variation>L</variation>
    <location>
        <position position="258"/>
    </location>
</feature>
<feature type="sequence variant" id="VAR_017912" description="In PERRS1; dbSNP:rs121908449." evidence="7">
    <original>W</original>
    <variation>R</variation>
    <location>
        <position position="299"/>
    </location>
</feature>
<feature type="sequence conflict" description="In Ref. 2; AAG09311/AAG09312." evidence="11" ref="2">
    <original>Q</original>
    <variation>R</variation>
    <location>
        <position position="112"/>
    </location>
</feature>
<feature type="sequence conflict" description="In Ref. 3; AAM12647." evidence="11" ref="3">
    <original>E</original>
    <variation>G</variation>
    <location>
        <position position="142"/>
    </location>
</feature>
<feature type="sequence conflict" description="In Ref. 3; AAM12646." evidence="11" ref="3">
    <original>L</original>
    <variation>S</variation>
    <location>
        <position position="306"/>
    </location>
</feature>
<feature type="sequence conflict" description="In Ref. 3; AAM12647." evidence="11" ref="3">
    <original>F</original>
    <variation>S</variation>
    <location>
        <position position="319"/>
    </location>
</feature>
<feature type="sequence conflict" description="In Ref. 3; AAM12647." evidence="11" ref="3">
    <original>E</original>
    <variation>G</variation>
    <location>
        <position position="336"/>
    </location>
</feature>
<feature type="sequence conflict" description="In Ref. 3; AAM12647." evidence="11" ref="3">
    <original>Q</original>
    <variation>R</variation>
    <location>
        <position position="392"/>
    </location>
</feature>
<feature type="sequence conflict" description="In Ref. 7; AAC25430." evidence="11" ref="7">
    <original>L</original>
    <variation>Q</variation>
    <location>
        <position position="417"/>
    </location>
</feature>
<feature type="sequence conflict" description="In Ref. 7; AAC25430." evidence="11" ref="7">
    <original>E</original>
    <variation>D</variation>
    <location>
        <position position="422"/>
    </location>
</feature>
<feature type="sequence conflict" description="In Ref. 3; AAM12647." evidence="11" ref="3">
    <original>K</original>
    <variation>R</variation>
    <location>
        <position position="428"/>
    </location>
</feature>
<feature type="sequence conflict" description="In Ref. 3; AAM12646." evidence="11" ref="3">
    <original>E</original>
    <variation>G</variation>
    <location>
        <position position="454"/>
    </location>
</feature>
<feature type="sequence conflict" description="In Ref. 2; AAG09311/AAG09312." evidence="11" ref="2">
    <original>E</original>
    <variation>K</variation>
    <location>
        <position position="460"/>
    </location>
</feature>
<feature type="sequence conflict" description="In Ref. 7; AAC25430." evidence="11" ref="7">
    <location>
        <begin position="518"/>
        <end position="519"/>
    </location>
</feature>
<feature type="sequence conflict" description="In Ref. 7; AAC25430." evidence="11" ref="7">
    <original>RVALE</original>
    <variation>LVVLD</variation>
    <location>
        <begin position="527"/>
        <end position="531"/>
    </location>
</feature>
<feature type="sequence conflict" description="In Ref. 7; AAC25430." evidence="11" ref="7">
    <original>GSMAPR</original>
    <variation>WSGANP</variation>
    <location>
        <begin position="544"/>
        <end position="549"/>
    </location>
</feature>
<feature type="sequence conflict" description="In Ref. 7; AAC25430." evidence="11" ref="7">
    <original>E</original>
    <variation>D</variation>
    <location>
        <position position="555"/>
    </location>
</feature>
<feature type="sequence conflict" description="In Ref. 7; AAC25430." evidence="11" ref="7">
    <original>L</original>
    <variation>R</variation>
    <location>
        <position position="561"/>
    </location>
</feature>
<feature type="sequence conflict" description="In Ref. 3; AAM12647." evidence="11" ref="3">
    <original>S</original>
    <variation>P</variation>
    <location>
        <position position="564"/>
    </location>
</feature>
<feature type="sequence conflict" description="In Ref. 7; AAC25430." evidence="11" ref="7">
    <original>P</original>
    <variation>T</variation>
    <location>
        <position position="566"/>
    </location>
</feature>
<feature type="sequence conflict" description="In Ref. 7; AAC25430." evidence="11" ref="7">
    <original>P</original>
    <variation>L</variation>
    <location>
        <position position="574"/>
    </location>
</feature>
<feature type="sequence conflict" description="In Ref. 7; AAC25430." evidence="11" ref="7">
    <original>L</original>
    <variation>V</variation>
    <location>
        <position position="599"/>
    </location>
</feature>
<feature type="sequence conflict" description="In Ref. 3; AAM12646." evidence="11" ref="3">
    <original>I</original>
    <variation>T</variation>
    <location>
        <position position="668"/>
    </location>
</feature>
<protein>
    <recommendedName>
        <fullName>Regulator of G-protein signaling 9</fullName>
        <shortName>RGS9</shortName>
    </recommendedName>
</protein>
<keyword id="KW-0025">Alternative splicing</keyword>
<keyword id="KW-0225">Disease variant</keyword>
<keyword id="KW-0472">Membrane</keyword>
<keyword id="KW-0597">Phosphoprotein</keyword>
<keyword id="KW-1267">Proteomics identification</keyword>
<keyword id="KW-1185">Reference proteome</keyword>
<keyword id="KW-0716">Sensory transduction</keyword>
<keyword id="KW-0734">Signal transduction inhibitor</keyword>
<keyword id="KW-0844">Vision</keyword>
<reference key="1">
    <citation type="journal article" date="1998" name="Mol. Pharmacol.">
        <title>Molecular characterization of human and rat RGS9L, a novel splice variant enriched in dopamine target regions, and chromosomal localization of the RGS9 gene.</title>
        <authorList>
            <person name="Granneman J.G."/>
            <person name="Zhai Y."/>
            <person name="Zhu Z."/>
            <person name="Bannon M.J."/>
            <person name="Burchett S.A."/>
            <person name="Schmidt C.J."/>
            <person name="Andrade R."/>
            <person name="Cooper J."/>
        </authorList>
    </citation>
    <scope>NUCLEOTIDE SEQUENCE [MRNA] (ISOFORMS 1 AND 2)</scope>
    <source>
        <tissue>Kidney</tissue>
        <tissue>Retina</tissue>
    </source>
</reference>
<reference key="2">
    <citation type="journal article" date="1999" name="Gene">
        <title>Structure, alternative splicing, and expression of the human RGS9 gene.</title>
        <authorList>
            <person name="Zhang K."/>
            <person name="Howes K.A."/>
            <person name="He W."/>
            <person name="Pettenati M.J."/>
            <person name="Palczewski K."/>
            <person name="Wensel T.G."/>
            <person name="Baehr W."/>
        </authorList>
    </citation>
    <scope>NUCLEOTIDE SEQUENCE [GENOMIC DNA]</scope>
    <scope>ALTERNATIVE SPLICING (ISOFORMS 3 AND 5)</scope>
</reference>
<reference key="3">
    <citation type="submission" date="2004-03" db="EMBL/GenBank/DDBJ databases">
        <title>cDNA clones of human proteins involved in signal transduction sequenced by the Guthrie cDNA resource center (www.cdna.org).</title>
        <authorList>
            <person name="Puhl H.L. III"/>
            <person name="Ikeda S.R."/>
            <person name="Aronstam R.S."/>
        </authorList>
    </citation>
    <scope>NUCLEOTIDE SEQUENCE [LARGE SCALE MRNA] (ISOFORMS 1; 4 AND 5)</scope>
    <source>
        <tissue>Brain</tissue>
    </source>
</reference>
<reference key="4">
    <citation type="journal article" date="2004" name="Nat. Genet.">
        <title>Complete sequencing and characterization of 21,243 full-length human cDNAs.</title>
        <authorList>
            <person name="Ota T."/>
            <person name="Suzuki Y."/>
            <person name="Nishikawa T."/>
            <person name="Otsuki T."/>
            <person name="Sugiyama T."/>
            <person name="Irie R."/>
            <person name="Wakamatsu A."/>
            <person name="Hayashi K."/>
            <person name="Sato H."/>
            <person name="Nagai K."/>
            <person name="Kimura K."/>
            <person name="Makita H."/>
            <person name="Sekine M."/>
            <person name="Obayashi M."/>
            <person name="Nishi T."/>
            <person name="Shibahara T."/>
            <person name="Tanaka T."/>
            <person name="Ishii S."/>
            <person name="Yamamoto J."/>
            <person name="Saito K."/>
            <person name="Kawai Y."/>
            <person name="Isono Y."/>
            <person name="Nakamura Y."/>
            <person name="Nagahari K."/>
            <person name="Murakami K."/>
            <person name="Yasuda T."/>
            <person name="Iwayanagi T."/>
            <person name="Wagatsuma M."/>
            <person name="Shiratori A."/>
            <person name="Sudo H."/>
            <person name="Hosoiri T."/>
            <person name="Kaku Y."/>
            <person name="Kodaira H."/>
            <person name="Kondo H."/>
            <person name="Sugawara M."/>
            <person name="Takahashi M."/>
            <person name="Kanda K."/>
            <person name="Yokoi T."/>
            <person name="Furuya T."/>
            <person name="Kikkawa E."/>
            <person name="Omura Y."/>
            <person name="Abe K."/>
            <person name="Kamihara K."/>
            <person name="Katsuta N."/>
            <person name="Sato K."/>
            <person name="Tanikawa M."/>
            <person name="Yamazaki M."/>
            <person name="Ninomiya K."/>
            <person name="Ishibashi T."/>
            <person name="Yamashita H."/>
            <person name="Murakawa K."/>
            <person name="Fujimori K."/>
            <person name="Tanai H."/>
            <person name="Kimata M."/>
            <person name="Watanabe M."/>
            <person name="Hiraoka S."/>
            <person name="Chiba Y."/>
            <person name="Ishida S."/>
            <person name="Ono Y."/>
            <person name="Takiguchi S."/>
            <person name="Watanabe S."/>
            <person name="Yosida M."/>
            <person name="Hotuta T."/>
            <person name="Kusano J."/>
            <person name="Kanehori K."/>
            <person name="Takahashi-Fujii A."/>
            <person name="Hara H."/>
            <person name="Tanase T.-O."/>
            <person name="Nomura Y."/>
            <person name="Togiya S."/>
            <person name="Komai F."/>
            <person name="Hara R."/>
            <person name="Takeuchi K."/>
            <person name="Arita M."/>
            <person name="Imose N."/>
            <person name="Musashino K."/>
            <person name="Yuuki H."/>
            <person name="Oshima A."/>
            <person name="Sasaki N."/>
            <person name="Aotsuka S."/>
            <person name="Yoshikawa Y."/>
            <person name="Matsunawa H."/>
            <person name="Ichihara T."/>
            <person name="Shiohata N."/>
            <person name="Sano S."/>
            <person name="Moriya S."/>
            <person name="Momiyama H."/>
            <person name="Satoh N."/>
            <person name="Takami S."/>
            <person name="Terashima Y."/>
            <person name="Suzuki O."/>
            <person name="Nakagawa S."/>
            <person name="Senoh A."/>
            <person name="Mizoguchi H."/>
            <person name="Goto Y."/>
            <person name="Shimizu F."/>
            <person name="Wakebe H."/>
            <person name="Hishigaki H."/>
            <person name="Watanabe T."/>
            <person name="Sugiyama A."/>
            <person name="Takemoto M."/>
            <person name="Kawakami B."/>
            <person name="Yamazaki M."/>
            <person name="Watanabe K."/>
            <person name="Kumagai A."/>
            <person name="Itakura S."/>
            <person name="Fukuzumi Y."/>
            <person name="Fujimori Y."/>
            <person name="Komiyama M."/>
            <person name="Tashiro H."/>
            <person name="Tanigami A."/>
            <person name="Fujiwara T."/>
            <person name="Ono T."/>
            <person name="Yamada K."/>
            <person name="Fujii Y."/>
            <person name="Ozaki K."/>
            <person name="Hirao M."/>
            <person name="Ohmori Y."/>
            <person name="Kawabata A."/>
            <person name="Hikiji T."/>
            <person name="Kobatake N."/>
            <person name="Inagaki H."/>
            <person name="Ikema Y."/>
            <person name="Okamoto S."/>
            <person name="Okitani R."/>
            <person name="Kawakami T."/>
            <person name="Noguchi S."/>
            <person name="Itoh T."/>
            <person name="Shigeta K."/>
            <person name="Senba T."/>
            <person name="Matsumura K."/>
            <person name="Nakajima Y."/>
            <person name="Mizuno T."/>
            <person name="Morinaga M."/>
            <person name="Sasaki M."/>
            <person name="Togashi T."/>
            <person name="Oyama M."/>
            <person name="Hata H."/>
            <person name="Watanabe M."/>
            <person name="Komatsu T."/>
            <person name="Mizushima-Sugano J."/>
            <person name="Satoh T."/>
            <person name="Shirai Y."/>
            <person name="Takahashi Y."/>
            <person name="Nakagawa K."/>
            <person name="Okumura K."/>
            <person name="Nagase T."/>
            <person name="Nomura N."/>
            <person name="Kikuchi H."/>
            <person name="Masuho Y."/>
            <person name="Yamashita R."/>
            <person name="Nakai K."/>
            <person name="Yada T."/>
            <person name="Nakamura Y."/>
            <person name="Ohara O."/>
            <person name="Isogai T."/>
            <person name="Sugano S."/>
        </authorList>
    </citation>
    <scope>NUCLEOTIDE SEQUENCE [LARGE SCALE MRNA] (ISOFORM 5)</scope>
    <source>
        <tissue>Brain</tissue>
    </source>
</reference>
<reference key="5">
    <citation type="journal article" date="2006" name="Nature">
        <title>DNA sequence of human chromosome 17 and analysis of rearrangement in the human lineage.</title>
        <authorList>
            <person name="Zody M.C."/>
            <person name="Garber M."/>
            <person name="Adams D.J."/>
            <person name="Sharpe T."/>
            <person name="Harrow J."/>
            <person name="Lupski J.R."/>
            <person name="Nicholson C."/>
            <person name="Searle S.M."/>
            <person name="Wilming L."/>
            <person name="Young S.K."/>
            <person name="Abouelleil A."/>
            <person name="Allen N.R."/>
            <person name="Bi W."/>
            <person name="Bloom T."/>
            <person name="Borowsky M.L."/>
            <person name="Bugalter B.E."/>
            <person name="Butler J."/>
            <person name="Chang J.L."/>
            <person name="Chen C.-K."/>
            <person name="Cook A."/>
            <person name="Corum B."/>
            <person name="Cuomo C.A."/>
            <person name="de Jong P.J."/>
            <person name="DeCaprio D."/>
            <person name="Dewar K."/>
            <person name="FitzGerald M."/>
            <person name="Gilbert J."/>
            <person name="Gibson R."/>
            <person name="Gnerre S."/>
            <person name="Goldstein S."/>
            <person name="Grafham D.V."/>
            <person name="Grocock R."/>
            <person name="Hafez N."/>
            <person name="Hagopian D.S."/>
            <person name="Hart E."/>
            <person name="Norman C.H."/>
            <person name="Humphray S."/>
            <person name="Jaffe D.B."/>
            <person name="Jones M."/>
            <person name="Kamal M."/>
            <person name="Khodiyar V.K."/>
            <person name="LaButti K."/>
            <person name="Laird G."/>
            <person name="Lehoczky J."/>
            <person name="Liu X."/>
            <person name="Lokyitsang T."/>
            <person name="Loveland J."/>
            <person name="Lui A."/>
            <person name="Macdonald P."/>
            <person name="Major J.E."/>
            <person name="Matthews L."/>
            <person name="Mauceli E."/>
            <person name="McCarroll S.A."/>
            <person name="Mihalev A.H."/>
            <person name="Mudge J."/>
            <person name="Nguyen C."/>
            <person name="Nicol R."/>
            <person name="O'Leary S.B."/>
            <person name="Osoegawa K."/>
            <person name="Schwartz D.C."/>
            <person name="Shaw-Smith C."/>
            <person name="Stankiewicz P."/>
            <person name="Steward C."/>
            <person name="Swarbreck D."/>
            <person name="Venkataraman V."/>
            <person name="Whittaker C.A."/>
            <person name="Yang X."/>
            <person name="Zimmer A.R."/>
            <person name="Bradley A."/>
            <person name="Hubbard T."/>
            <person name="Birren B.W."/>
            <person name="Rogers J."/>
            <person name="Lander E.S."/>
            <person name="Nusbaum C."/>
        </authorList>
    </citation>
    <scope>NUCLEOTIDE SEQUENCE [LARGE SCALE GENOMIC DNA]</scope>
</reference>
<reference key="6">
    <citation type="submission" date="2005-07" db="EMBL/GenBank/DDBJ databases">
        <authorList>
            <person name="Mural R.J."/>
            <person name="Istrail S."/>
            <person name="Sutton G.G."/>
            <person name="Florea L."/>
            <person name="Halpern A.L."/>
            <person name="Mobarry C.M."/>
            <person name="Lippert R."/>
            <person name="Walenz B."/>
            <person name="Shatkay H."/>
            <person name="Dew I."/>
            <person name="Miller J.R."/>
            <person name="Flanigan M.J."/>
            <person name="Edwards N.J."/>
            <person name="Bolanos R."/>
            <person name="Fasulo D."/>
            <person name="Halldorsson B.V."/>
            <person name="Hannenhalli S."/>
            <person name="Turner R."/>
            <person name="Yooseph S."/>
            <person name="Lu F."/>
            <person name="Nusskern D.R."/>
            <person name="Shue B.C."/>
            <person name="Zheng X.H."/>
            <person name="Zhong F."/>
            <person name="Delcher A.L."/>
            <person name="Huson D.H."/>
            <person name="Kravitz S.A."/>
            <person name="Mouchard L."/>
            <person name="Reinert K."/>
            <person name="Remington K.A."/>
            <person name="Clark A.G."/>
            <person name="Waterman M.S."/>
            <person name="Eichler E.E."/>
            <person name="Adams M.D."/>
            <person name="Hunkapiller M.W."/>
            <person name="Myers E.W."/>
            <person name="Venter J.C."/>
        </authorList>
    </citation>
    <scope>NUCLEOTIDE SEQUENCE [LARGE SCALE GENOMIC DNA]</scope>
</reference>
<reference key="7">
    <citation type="submission" date="1998-06" db="EMBL/GenBank/DDBJ databases">
        <title>Homo sapiens regulator of G protein signaling 9.</title>
        <authorList>
            <person name="Chatterjee T.K."/>
            <person name="Fisher R.A."/>
        </authorList>
    </citation>
    <scope>NUCLEOTIDE SEQUENCE [MRNA] OF 218-674 (ISOFORM 1)</scope>
</reference>
<reference key="8">
    <citation type="journal article" date="2003" name="J. Neurosci.">
        <title>The DEP domain determines subcellular targeting of the GTPase activating protein RGS9 in vivo.</title>
        <authorList>
            <person name="Martemyanov K.A."/>
            <person name="Lishko P.V."/>
            <person name="Calero N."/>
            <person name="Keresztes G."/>
            <person name="Sokolov M."/>
            <person name="Strissel K.J."/>
            <person name="Leskov I.B."/>
            <person name="Hopp J.A."/>
            <person name="Kolesnikov A.V."/>
            <person name="Chen C.-K."/>
            <person name="Lem J."/>
            <person name="Heller S."/>
            <person name="Burns M.E."/>
            <person name="Arshavsky V.Y."/>
        </authorList>
    </citation>
    <scope>DEP DOMAIN TARGETING FUNCTION</scope>
</reference>
<reference key="9">
    <citation type="journal article" date="2004" name="Nature">
        <title>Defects in RGS9 or its anchor protein R9AP in patients with slow photoreceptor deactivation.</title>
        <authorList>
            <person name="Nishiguchi K.M."/>
            <person name="Sandberg M.A."/>
            <person name="Kooijman A.C."/>
            <person name="Martemyanov K.A."/>
            <person name="Pott J.W.R."/>
            <person name="Hagstrom S.A."/>
            <person name="Arshavsky V.Y."/>
            <person name="Berson E.L."/>
            <person name="Dryja T.P."/>
        </authorList>
    </citation>
    <scope>VARIANT PERRS1 ARG-299</scope>
</reference>
<sequence>MTIRHQGQQYRPRMAFLQKIEALVKDMQNPETGVRMQNQRVLVTSVPHAMTGSDVLQWIVQRLWISSLEAQNLGNFIVRYGYIYPLQDPKNLILKPDGSLYRFQTPYFWPTQQWPAEDTDYAIYLAKRNIKKKGILEEYEKENYNFLNQKMNYKWDFVIMQAKEQYRAGKERNKADRYALDCQEKAYWLVHRCPPGMDNVLDYGLDRVTNPNEVKVNQKQTVVAVKKEIMYYQQALMRSTVKSSVSLGGIVKYSEQFSSNDAIMSGCLPSNPWITDDTQFWDLNAKLVEIPTKMRVERWAFNFSELIRDPKGRQSFQYFLKKEFSGENLGFWEACEDLKYGDQSKVKEKAEEIYKLFLAPGARRWINIDGKTMDITVKGLKHPHRYVLDAAQTHIYMLMKKDSYARYLKSPIYKDMLAKAIEPQETTKKSSTLPFMRRHLRSSPSPVILRQLEEEAKAREAANTVDITQPGQHMAPSPHLTVYTGTCMPPSPSSPFSSSCRSPRKPFASPSRFIRRPSTTICPSPIRVALESSSGLEQKGECSGSMAPRGPSVTESSEASLDTSWPRSRPRAPPKARMALSFSRFLRRGCLASPVFARLSPKCPAVSHGRVQPLGDVGQQLPRLKSKRVANFFQIKMDVPTGSGTCLMDSEDAGTGESGDRATEKEVICPWESL</sequence>
<comment type="function">
    <text evidence="1">Inhibits signal transduction by increasing the GTPase activity of G protein alpha subunits thereby driving them into their inactive GDP-bound form. Binds to GNAT1. Involved in phototransduction; key element in the recovery phase of visual transduction (By similarity).</text>
</comment>
<comment type="subunit">
    <text evidence="2">Heterodimer with GNB5. Interacts with RGS7BP, leading to regulate the subcellular location of the heterodimer formed with GNB5. Component of the RGS9-1-Gbeta5 complex composed of RGS9 (RGS9-1), Gbeta5 (GNB5) and RGS9BP. Interacts with PDE6G and GNAT1.</text>
</comment>
<comment type="interaction">
    <interactant intactId="EBI-6426975">
        <id>O75916</id>
    </interactant>
    <interactant intactId="EBI-713325">
        <id>O14775</id>
        <label>GNB5</label>
    </interactant>
    <organismsDiffer>false</organismsDiffer>
    <experiments>2</experiments>
</comment>
<comment type="subcellular location">
    <molecule>Isoform 3</molecule>
    <subcellularLocation>
        <location>Membrane</location>
        <topology>Peripheral membrane protein</topology>
    </subcellularLocation>
    <text evidence="1">Isoform 3 is targeted to the membrane via its interaction with RGS9BP.</text>
</comment>
<comment type="alternative products">
    <event type="alternative splicing"/>
    <isoform>
        <id>O75916-1</id>
        <name>1</name>
        <name>RGS9L</name>
        <sequence type="displayed"/>
    </isoform>
    <isoform>
        <id>O75916-2</id>
        <name>2</name>
        <name>RGS9S</name>
        <sequence type="described" ref="VSP_005675"/>
    </isoform>
    <isoform>
        <id>O75916-3</id>
        <name>3</name>
        <name>RGS9-1</name>
        <sequence type="described" ref="VSP_038381 VSP_038382 VSP_038383"/>
    </isoform>
    <isoform>
        <id>O75916-4</id>
        <name>4</name>
        <sequence type="described" ref="VSP_005674"/>
    </isoform>
    <isoform>
        <id>O75916-5</id>
        <name>5</name>
        <sequence type="described" ref="VSP_038381"/>
    </isoform>
</comment>
<comment type="tissue specificity">
    <text>Highly expressed in the caudate and putamen, lower levels found in the hypothalamus and nucleus accumbens and very low levels in cerebellum. Not expressed in globus pallidus or cingulate cortex. Isoform 2 is expressed predominantly in pineal gland and retina. Isoform 3 is expressed in retina (abundant in photoreceptors).</text>
</comment>
<comment type="domain">
    <text evidence="6">In photoreceptor cells the DEP domain is essential for targeting RGS9 to the outer rod segments.</text>
</comment>
<comment type="PTM">
    <text evidence="1">Retinal isoform 3 is light-dependent phosphorylated at 'Ser-478'. Phosphorylation is decreased by light exposition (By similarity).</text>
</comment>
<comment type="disease" evidence="7">
    <disease id="DI-02219">
        <name>Prolonged electroretinal response suppression 1</name>
        <acronym>PERRS1</acronym>
        <description>A form of bradyopsia, an ocular disorder characterized by prolonged electroretinal response suppression leading to difficulties adjusting to changes in luminance, normal to subnormal acuity and photophobia. PERRS1 is an autosomal recessive form with onset in childhood.</description>
        <dbReference type="MIM" id="608415"/>
    </disease>
    <text>The disease is caused by variants affecting the gene represented in this entry.</text>
</comment>
<comment type="sequence caution" evidence="11">
    <conflict type="erroneous initiation">
        <sequence resource="EMBL-CDS" id="AAC25430"/>
    </conflict>
</comment>
<dbReference type="EMBL" id="AF071476">
    <property type="protein sequence ID" value="AAC64040.1"/>
    <property type="molecule type" value="mRNA"/>
</dbReference>
<dbReference type="EMBL" id="AF178070">
    <property type="protein sequence ID" value="AAG09311.1"/>
    <property type="molecule type" value="Genomic_DNA"/>
</dbReference>
<dbReference type="EMBL" id="AF178056">
    <property type="protein sequence ID" value="AAG09311.1"/>
    <property type="status" value="JOINED"/>
    <property type="molecule type" value="Genomic_DNA"/>
</dbReference>
<dbReference type="EMBL" id="AF178057">
    <property type="protein sequence ID" value="AAG09311.1"/>
    <property type="status" value="JOINED"/>
    <property type="molecule type" value="Genomic_DNA"/>
</dbReference>
<dbReference type="EMBL" id="AF178058">
    <property type="protein sequence ID" value="AAG09311.1"/>
    <property type="status" value="JOINED"/>
    <property type="molecule type" value="Genomic_DNA"/>
</dbReference>
<dbReference type="EMBL" id="AF178059">
    <property type="protein sequence ID" value="AAG09311.1"/>
    <property type="status" value="JOINED"/>
    <property type="molecule type" value="Genomic_DNA"/>
</dbReference>
<dbReference type="EMBL" id="AF178060">
    <property type="protein sequence ID" value="AAG09311.1"/>
    <property type="status" value="JOINED"/>
    <property type="molecule type" value="Genomic_DNA"/>
</dbReference>
<dbReference type="EMBL" id="AF178061">
    <property type="protein sequence ID" value="AAG09311.1"/>
    <property type="status" value="JOINED"/>
    <property type="molecule type" value="Genomic_DNA"/>
</dbReference>
<dbReference type="EMBL" id="AF178062">
    <property type="protein sequence ID" value="AAG09311.1"/>
    <property type="status" value="JOINED"/>
    <property type="molecule type" value="Genomic_DNA"/>
</dbReference>
<dbReference type="EMBL" id="AF178063">
    <property type="protein sequence ID" value="AAG09311.1"/>
    <property type="status" value="JOINED"/>
    <property type="molecule type" value="Genomic_DNA"/>
</dbReference>
<dbReference type="EMBL" id="AF178064">
    <property type="protein sequence ID" value="AAG09311.1"/>
    <property type="status" value="JOINED"/>
    <property type="molecule type" value="Genomic_DNA"/>
</dbReference>
<dbReference type="EMBL" id="AF178065">
    <property type="protein sequence ID" value="AAG09311.1"/>
    <property type="status" value="JOINED"/>
    <property type="molecule type" value="Genomic_DNA"/>
</dbReference>
<dbReference type="EMBL" id="AF178066">
    <property type="protein sequence ID" value="AAG09311.1"/>
    <property type="status" value="JOINED"/>
    <property type="molecule type" value="Genomic_DNA"/>
</dbReference>
<dbReference type="EMBL" id="AF178067">
    <property type="protein sequence ID" value="AAG09311.1"/>
    <property type="status" value="JOINED"/>
    <property type="molecule type" value="Genomic_DNA"/>
</dbReference>
<dbReference type="EMBL" id="AF178068">
    <property type="protein sequence ID" value="AAG09311.1"/>
    <property type="status" value="JOINED"/>
    <property type="molecule type" value="Genomic_DNA"/>
</dbReference>
<dbReference type="EMBL" id="AF178069">
    <property type="protein sequence ID" value="AAG09311.1"/>
    <property type="status" value="JOINED"/>
    <property type="molecule type" value="Genomic_DNA"/>
</dbReference>
<dbReference type="EMBL" id="AF178072">
    <property type="protein sequence ID" value="AAG09312.1"/>
    <property type="molecule type" value="Genomic_DNA"/>
</dbReference>
<dbReference type="EMBL" id="AF178056">
    <property type="protein sequence ID" value="AAG09312.1"/>
    <property type="status" value="JOINED"/>
    <property type="molecule type" value="Genomic_DNA"/>
</dbReference>
<dbReference type="EMBL" id="AF178057">
    <property type="protein sequence ID" value="AAG09312.1"/>
    <property type="status" value="JOINED"/>
    <property type="molecule type" value="Genomic_DNA"/>
</dbReference>
<dbReference type="EMBL" id="AF178058">
    <property type="protein sequence ID" value="AAG09312.1"/>
    <property type="status" value="JOINED"/>
    <property type="molecule type" value="Genomic_DNA"/>
</dbReference>
<dbReference type="EMBL" id="AF178059">
    <property type="protein sequence ID" value="AAG09312.1"/>
    <property type="status" value="JOINED"/>
    <property type="molecule type" value="Genomic_DNA"/>
</dbReference>
<dbReference type="EMBL" id="AF178060">
    <property type="protein sequence ID" value="AAG09312.1"/>
    <property type="status" value="JOINED"/>
    <property type="molecule type" value="Genomic_DNA"/>
</dbReference>
<dbReference type="EMBL" id="AF178061">
    <property type="protein sequence ID" value="AAG09312.1"/>
    <property type="status" value="JOINED"/>
    <property type="molecule type" value="Genomic_DNA"/>
</dbReference>
<dbReference type="EMBL" id="AF178062">
    <property type="protein sequence ID" value="AAG09312.1"/>
    <property type="status" value="JOINED"/>
    <property type="molecule type" value="Genomic_DNA"/>
</dbReference>
<dbReference type="EMBL" id="AF178063">
    <property type="protein sequence ID" value="AAG09312.1"/>
    <property type="status" value="JOINED"/>
    <property type="molecule type" value="Genomic_DNA"/>
</dbReference>
<dbReference type="EMBL" id="AF178064">
    <property type="protein sequence ID" value="AAG09312.1"/>
    <property type="status" value="JOINED"/>
    <property type="molecule type" value="Genomic_DNA"/>
</dbReference>
<dbReference type="EMBL" id="AF178065">
    <property type="protein sequence ID" value="AAG09312.1"/>
    <property type="status" value="JOINED"/>
    <property type="molecule type" value="Genomic_DNA"/>
</dbReference>
<dbReference type="EMBL" id="AF178066">
    <property type="protein sequence ID" value="AAG09312.1"/>
    <property type="status" value="JOINED"/>
    <property type="molecule type" value="Genomic_DNA"/>
</dbReference>
<dbReference type="EMBL" id="AF178067">
    <property type="protein sequence ID" value="AAG09312.1"/>
    <property type="status" value="JOINED"/>
    <property type="molecule type" value="Genomic_DNA"/>
</dbReference>
<dbReference type="EMBL" id="AF178068">
    <property type="protein sequence ID" value="AAG09312.1"/>
    <property type="status" value="JOINED"/>
    <property type="molecule type" value="Genomic_DNA"/>
</dbReference>
<dbReference type="EMBL" id="AF178069">
    <property type="protein sequence ID" value="AAG09312.1"/>
    <property type="status" value="JOINED"/>
    <property type="molecule type" value="Genomic_DNA"/>
</dbReference>
<dbReference type="EMBL" id="AF178070">
    <property type="protein sequence ID" value="AAG09312.1"/>
    <property type="status" value="JOINED"/>
    <property type="molecule type" value="Genomic_DNA"/>
</dbReference>
<dbReference type="EMBL" id="AF178071">
    <property type="protein sequence ID" value="AAG09312.1"/>
    <property type="status" value="JOINED"/>
    <property type="molecule type" value="Genomic_DNA"/>
</dbReference>
<dbReference type="EMBL" id="AF493932">
    <property type="protein sequence ID" value="AAM12646.1"/>
    <property type="molecule type" value="mRNA"/>
</dbReference>
<dbReference type="EMBL" id="AF493933">
    <property type="protein sequence ID" value="AAM12647.1"/>
    <property type="molecule type" value="mRNA"/>
</dbReference>
<dbReference type="EMBL" id="AY585190">
    <property type="protein sequence ID" value="AAT79493.1"/>
    <property type="molecule type" value="mRNA"/>
</dbReference>
<dbReference type="EMBL" id="AY585191">
    <property type="protein sequence ID" value="AAT79494.1"/>
    <property type="molecule type" value="mRNA"/>
</dbReference>
<dbReference type="EMBL" id="AK290535">
    <property type="protein sequence ID" value="BAF83224.1"/>
    <property type="molecule type" value="mRNA"/>
</dbReference>
<dbReference type="EMBL" id="AC015821">
    <property type="status" value="NOT_ANNOTATED_CDS"/>
    <property type="molecule type" value="Genomic_DNA"/>
</dbReference>
<dbReference type="EMBL" id="AC060771">
    <property type="status" value="NOT_ANNOTATED_CDS"/>
    <property type="molecule type" value="Genomic_DNA"/>
</dbReference>
<dbReference type="EMBL" id="CH471099">
    <property type="protein sequence ID" value="EAW88998.1"/>
    <property type="molecule type" value="Genomic_DNA"/>
</dbReference>
<dbReference type="EMBL" id="AF073710">
    <property type="protein sequence ID" value="AAC25430.1"/>
    <property type="status" value="ALT_INIT"/>
    <property type="molecule type" value="mRNA"/>
</dbReference>
<dbReference type="CCDS" id="CCDS42373.1">
    <molecule id="O75916-1"/>
</dbReference>
<dbReference type="CCDS" id="CCDS45764.1">
    <molecule id="O75916-5"/>
</dbReference>
<dbReference type="RefSeq" id="NP_001075424.1">
    <molecule id="O75916-5"/>
    <property type="nucleotide sequence ID" value="NM_001081955.3"/>
</dbReference>
<dbReference type="RefSeq" id="NP_003826.2">
    <molecule id="O75916-1"/>
    <property type="nucleotide sequence ID" value="NM_003835.4"/>
</dbReference>
<dbReference type="EMDB" id="EMD-31365"/>
<dbReference type="EMDB" id="EMD-31366"/>
<dbReference type="SMR" id="O75916"/>
<dbReference type="BioGRID" id="114315">
    <property type="interactions" value="13"/>
</dbReference>
<dbReference type="CORUM" id="O75916"/>
<dbReference type="FunCoup" id="O75916">
    <property type="interactions" value="638"/>
</dbReference>
<dbReference type="IntAct" id="O75916">
    <property type="interactions" value="7"/>
</dbReference>
<dbReference type="MINT" id="O75916"/>
<dbReference type="STRING" id="9606.ENSP00000262406"/>
<dbReference type="iPTMnet" id="O75916"/>
<dbReference type="PhosphoSitePlus" id="O75916"/>
<dbReference type="BioMuta" id="RGS9"/>
<dbReference type="MassIVE" id="O75916"/>
<dbReference type="PaxDb" id="9606-ENSP00000262406"/>
<dbReference type="PeptideAtlas" id="O75916"/>
<dbReference type="ProteomicsDB" id="50271">
    <molecule id="O75916-1"/>
</dbReference>
<dbReference type="ProteomicsDB" id="50272">
    <molecule id="O75916-2"/>
</dbReference>
<dbReference type="ProteomicsDB" id="50273">
    <molecule id="O75916-3"/>
</dbReference>
<dbReference type="ProteomicsDB" id="50274">
    <molecule id="O75916-4"/>
</dbReference>
<dbReference type="ProteomicsDB" id="50275">
    <molecule id="O75916-5"/>
</dbReference>
<dbReference type="Antibodypedia" id="9570">
    <property type="antibodies" value="170 antibodies from 28 providers"/>
</dbReference>
<dbReference type="DNASU" id="8787"/>
<dbReference type="Ensembl" id="ENST00000262406.10">
    <molecule id="O75916-1"/>
    <property type="protein sequence ID" value="ENSP00000262406.9"/>
    <property type="gene ID" value="ENSG00000108370.17"/>
</dbReference>
<dbReference type="Ensembl" id="ENST00000449996.7">
    <molecule id="O75916-5"/>
    <property type="protein sequence ID" value="ENSP00000396329.3"/>
    <property type="gene ID" value="ENSG00000108370.17"/>
</dbReference>
<dbReference type="GeneID" id="8787"/>
<dbReference type="KEGG" id="hsa:8787"/>
<dbReference type="MANE-Select" id="ENST00000262406.10">
    <property type="protein sequence ID" value="ENSP00000262406.9"/>
    <property type="RefSeq nucleotide sequence ID" value="NM_003835.4"/>
    <property type="RefSeq protein sequence ID" value="NP_003826.2"/>
</dbReference>
<dbReference type="UCSC" id="uc002jfd.4">
    <molecule id="O75916-1"/>
    <property type="organism name" value="human"/>
</dbReference>
<dbReference type="AGR" id="HGNC:10004"/>
<dbReference type="CTD" id="8787"/>
<dbReference type="DisGeNET" id="8787"/>
<dbReference type="GeneCards" id="RGS9"/>
<dbReference type="HGNC" id="HGNC:10004">
    <property type="gene designation" value="RGS9"/>
</dbReference>
<dbReference type="HPA" id="ENSG00000108370">
    <property type="expression patterns" value="Tissue enriched (brain)"/>
</dbReference>
<dbReference type="MalaCards" id="RGS9"/>
<dbReference type="MIM" id="604067">
    <property type="type" value="gene"/>
</dbReference>
<dbReference type="MIM" id="608415">
    <property type="type" value="phenotype"/>
</dbReference>
<dbReference type="neXtProt" id="NX_O75916"/>
<dbReference type="OpenTargets" id="ENSG00000108370"/>
<dbReference type="Orphanet" id="75374">
    <property type="disease" value="Bradyopsia"/>
</dbReference>
<dbReference type="PharmGKB" id="PA34380"/>
<dbReference type="VEuPathDB" id="HostDB:ENSG00000108370"/>
<dbReference type="eggNOG" id="KOG3589">
    <property type="taxonomic scope" value="Eukaryota"/>
</dbReference>
<dbReference type="GeneTree" id="ENSGT00940000156505"/>
<dbReference type="InParanoid" id="O75916"/>
<dbReference type="OMA" id="PRMACLR"/>
<dbReference type="OrthoDB" id="196547at2759"/>
<dbReference type="PAN-GO" id="O75916">
    <property type="GO annotations" value="6 GO annotations based on evolutionary models"/>
</dbReference>
<dbReference type="PhylomeDB" id="O75916"/>
<dbReference type="TreeFam" id="TF351956"/>
<dbReference type="PathwayCommons" id="O75916"/>
<dbReference type="Reactome" id="R-HSA-2514859">
    <molecule id="O75916-3"/>
    <property type="pathway name" value="Inactivation, recovery and regulation of the phototransduction cascade"/>
</dbReference>
<dbReference type="Reactome" id="R-HSA-418594">
    <property type="pathway name" value="G alpha (i) signalling events"/>
</dbReference>
<dbReference type="Reactome" id="R-HSA-6814122">
    <property type="pathway name" value="Cooperation of PDCL (PhLP1) and TRiC/CCT in G-protein beta folding"/>
</dbReference>
<dbReference type="SignaLink" id="O75916"/>
<dbReference type="BioGRID-ORCS" id="8787">
    <property type="hits" value="12 hits in 1151 CRISPR screens"/>
</dbReference>
<dbReference type="ChiTaRS" id="RGS9">
    <property type="organism name" value="human"/>
</dbReference>
<dbReference type="GeneWiki" id="RGS9"/>
<dbReference type="GenomeRNAi" id="8787"/>
<dbReference type="Pharos" id="O75916">
    <property type="development level" value="Tbio"/>
</dbReference>
<dbReference type="PRO" id="PR:O75916"/>
<dbReference type="Proteomes" id="UP000005640">
    <property type="component" value="Chromosome 17"/>
</dbReference>
<dbReference type="RNAct" id="O75916">
    <property type="molecule type" value="protein"/>
</dbReference>
<dbReference type="Bgee" id="ENSG00000108370">
    <property type="expression patterns" value="Expressed in putamen and 105 other cell types or tissues"/>
</dbReference>
<dbReference type="ExpressionAtlas" id="O75916">
    <property type="expression patterns" value="baseline and differential"/>
</dbReference>
<dbReference type="GO" id="GO:0005737">
    <property type="term" value="C:cytoplasm"/>
    <property type="evidence" value="ECO:0000318"/>
    <property type="project" value="GO_Central"/>
</dbReference>
<dbReference type="GO" id="GO:0098978">
    <property type="term" value="C:glutamatergic synapse"/>
    <property type="evidence" value="ECO:0007669"/>
    <property type="project" value="Ensembl"/>
</dbReference>
<dbReference type="GO" id="GO:0043005">
    <property type="term" value="C:neuron projection"/>
    <property type="evidence" value="ECO:0000318"/>
    <property type="project" value="GO_Central"/>
</dbReference>
<dbReference type="GO" id="GO:0005886">
    <property type="term" value="C:plasma membrane"/>
    <property type="evidence" value="ECO:0000318"/>
    <property type="project" value="GO_Central"/>
</dbReference>
<dbReference type="GO" id="GO:0098839">
    <property type="term" value="C:postsynaptic density membrane"/>
    <property type="evidence" value="ECO:0007669"/>
    <property type="project" value="Ensembl"/>
</dbReference>
<dbReference type="GO" id="GO:0042734">
    <property type="term" value="C:presynaptic membrane"/>
    <property type="evidence" value="ECO:0007669"/>
    <property type="project" value="Ensembl"/>
</dbReference>
<dbReference type="GO" id="GO:0005096">
    <property type="term" value="F:GTPase activator activity"/>
    <property type="evidence" value="ECO:0000318"/>
    <property type="project" value="GO_Central"/>
</dbReference>
<dbReference type="GO" id="GO:0003924">
    <property type="term" value="F:GTPase activity"/>
    <property type="evidence" value="ECO:0000304"/>
    <property type="project" value="Reactome"/>
</dbReference>
<dbReference type="GO" id="GO:1990603">
    <property type="term" value="P:dark adaptation"/>
    <property type="evidence" value="ECO:0007669"/>
    <property type="project" value="Ensembl"/>
</dbReference>
<dbReference type="GO" id="GO:0007212">
    <property type="term" value="P:G protein-coupled dopamine receptor signaling pathway"/>
    <property type="evidence" value="ECO:0000318"/>
    <property type="project" value="GO_Central"/>
</dbReference>
<dbReference type="GO" id="GO:0007186">
    <property type="term" value="P:G protein-coupled receptor signaling pathway"/>
    <property type="evidence" value="ECO:0000304"/>
    <property type="project" value="Reactome"/>
</dbReference>
<dbReference type="GO" id="GO:0035556">
    <property type="term" value="P:intracellular signal transduction"/>
    <property type="evidence" value="ECO:0007669"/>
    <property type="project" value="InterPro"/>
</dbReference>
<dbReference type="GO" id="GO:0036367">
    <property type="term" value="P:light adaption"/>
    <property type="evidence" value="ECO:0007669"/>
    <property type="project" value="Ensembl"/>
</dbReference>
<dbReference type="GO" id="GO:0009968">
    <property type="term" value="P:negative regulation of signal transduction"/>
    <property type="evidence" value="ECO:0007669"/>
    <property type="project" value="UniProtKB-KW"/>
</dbReference>
<dbReference type="GO" id="GO:0007399">
    <property type="term" value="P:nervous system development"/>
    <property type="evidence" value="ECO:0007669"/>
    <property type="project" value="Ensembl"/>
</dbReference>
<dbReference type="GO" id="GO:1905912">
    <property type="term" value="P:regulation of calcium ion export across plasma membrane"/>
    <property type="evidence" value="ECO:0007669"/>
    <property type="project" value="Ensembl"/>
</dbReference>
<dbReference type="GO" id="GO:0008277">
    <property type="term" value="P:regulation of G protein-coupled receptor signaling pathway"/>
    <property type="evidence" value="ECO:0000304"/>
    <property type="project" value="ProtInc"/>
</dbReference>
<dbReference type="GO" id="GO:0001975">
    <property type="term" value="P:response to amphetamine"/>
    <property type="evidence" value="ECO:0007669"/>
    <property type="project" value="Ensembl"/>
</dbReference>
<dbReference type="GO" id="GO:0032355">
    <property type="term" value="P:response to estradiol"/>
    <property type="evidence" value="ECO:0007669"/>
    <property type="project" value="Ensembl"/>
</dbReference>
<dbReference type="GO" id="GO:0007601">
    <property type="term" value="P:visual perception"/>
    <property type="evidence" value="ECO:0007669"/>
    <property type="project" value="UniProtKB-KW"/>
</dbReference>
<dbReference type="CDD" id="cd04450">
    <property type="entry name" value="DEP_RGS7-like"/>
    <property type="match status" value="1"/>
</dbReference>
<dbReference type="CDD" id="cd00068">
    <property type="entry name" value="GGL"/>
    <property type="match status" value="1"/>
</dbReference>
<dbReference type="CDD" id="cd08739">
    <property type="entry name" value="RGS_RGS9"/>
    <property type="match status" value="1"/>
</dbReference>
<dbReference type="FunFam" id="1.10.1240.60:FF:000001">
    <property type="entry name" value="Regulator of G-protein signaling 6"/>
    <property type="match status" value="1"/>
</dbReference>
<dbReference type="FunFam" id="1.10.167.10:FF:000002">
    <property type="entry name" value="Regulator of G-protein signaling 6 isoform 9"/>
    <property type="match status" value="1"/>
</dbReference>
<dbReference type="FunFam" id="1.10.10.10:FF:000329">
    <property type="entry name" value="regulator of G-protein signaling 9 isoform X2"/>
    <property type="match status" value="1"/>
</dbReference>
<dbReference type="Gene3D" id="1.10.1240.60">
    <property type="match status" value="1"/>
</dbReference>
<dbReference type="Gene3D" id="1.10.167.10">
    <property type="entry name" value="Regulator of G-protein Signalling 4, domain 2"/>
    <property type="match status" value="1"/>
</dbReference>
<dbReference type="Gene3D" id="4.10.260.10">
    <property type="entry name" value="Transducin (heterotrimeric G protein), gamma chain"/>
    <property type="match status" value="1"/>
</dbReference>
<dbReference type="Gene3D" id="1.10.10.10">
    <property type="entry name" value="Winged helix-like DNA-binding domain superfamily/Winged helix DNA-binding domain"/>
    <property type="match status" value="1"/>
</dbReference>
<dbReference type="InterPro" id="IPR000591">
    <property type="entry name" value="DEP_dom"/>
</dbReference>
<dbReference type="InterPro" id="IPR015898">
    <property type="entry name" value="G-protein_gamma-like_dom"/>
</dbReference>
<dbReference type="InterPro" id="IPR036284">
    <property type="entry name" value="GGL_sf"/>
</dbReference>
<dbReference type="InterPro" id="IPR016137">
    <property type="entry name" value="RGS"/>
</dbReference>
<dbReference type="InterPro" id="IPR047016">
    <property type="entry name" value="RGS6/7/9/11"/>
</dbReference>
<dbReference type="InterPro" id="IPR047017">
    <property type="entry name" value="RGS6/7/9/11_DHEX_sf"/>
</dbReference>
<dbReference type="InterPro" id="IPR047077">
    <property type="entry name" value="RGS9_RGS"/>
</dbReference>
<dbReference type="InterPro" id="IPR040759">
    <property type="entry name" value="RGS_DHEX"/>
</dbReference>
<dbReference type="InterPro" id="IPR036305">
    <property type="entry name" value="RGS_sf"/>
</dbReference>
<dbReference type="InterPro" id="IPR044926">
    <property type="entry name" value="RGS_subdomain_2"/>
</dbReference>
<dbReference type="InterPro" id="IPR036388">
    <property type="entry name" value="WH-like_DNA-bd_sf"/>
</dbReference>
<dbReference type="InterPro" id="IPR036390">
    <property type="entry name" value="WH_DNA-bd_sf"/>
</dbReference>
<dbReference type="PANTHER" id="PTHR45746">
    <property type="entry name" value="LP21163P"/>
    <property type="match status" value="1"/>
</dbReference>
<dbReference type="PANTHER" id="PTHR45746:SF1">
    <property type="entry name" value="REGULATOR OF G-PROTEIN SIGNALING 9"/>
    <property type="match status" value="1"/>
</dbReference>
<dbReference type="Pfam" id="PF00610">
    <property type="entry name" value="DEP"/>
    <property type="match status" value="1"/>
</dbReference>
<dbReference type="Pfam" id="PF00631">
    <property type="entry name" value="G-gamma"/>
    <property type="match status" value="1"/>
</dbReference>
<dbReference type="Pfam" id="PF00615">
    <property type="entry name" value="RGS"/>
    <property type="match status" value="1"/>
</dbReference>
<dbReference type="Pfam" id="PF18148">
    <property type="entry name" value="RGS_DHEX"/>
    <property type="match status" value="1"/>
</dbReference>
<dbReference type="PRINTS" id="PR01301">
    <property type="entry name" value="RGSPROTEIN"/>
</dbReference>
<dbReference type="SMART" id="SM00049">
    <property type="entry name" value="DEP"/>
    <property type="match status" value="1"/>
</dbReference>
<dbReference type="SMART" id="SM01224">
    <property type="entry name" value="G_gamma"/>
    <property type="match status" value="1"/>
</dbReference>
<dbReference type="SMART" id="SM00224">
    <property type="entry name" value="GGL"/>
    <property type="match status" value="1"/>
</dbReference>
<dbReference type="SMART" id="SM00315">
    <property type="entry name" value="RGS"/>
    <property type="match status" value="1"/>
</dbReference>
<dbReference type="SUPFAM" id="SSF48097">
    <property type="entry name" value="Regulator of G-protein signaling, RGS"/>
    <property type="match status" value="1"/>
</dbReference>
<dbReference type="SUPFAM" id="SSF48670">
    <property type="entry name" value="Transducin (heterotrimeric G protein), gamma chain"/>
    <property type="match status" value="1"/>
</dbReference>
<dbReference type="SUPFAM" id="SSF46785">
    <property type="entry name" value="Winged helix' DNA-binding domain"/>
    <property type="match status" value="1"/>
</dbReference>
<dbReference type="PROSITE" id="PS50186">
    <property type="entry name" value="DEP"/>
    <property type="match status" value="1"/>
</dbReference>
<dbReference type="PROSITE" id="PS50132">
    <property type="entry name" value="RGS"/>
    <property type="match status" value="1"/>
</dbReference>
<name>RGS9_HUMAN</name>
<organism>
    <name type="scientific">Homo sapiens</name>
    <name type="common">Human</name>
    <dbReference type="NCBI Taxonomy" id="9606"/>
    <lineage>
        <taxon>Eukaryota</taxon>
        <taxon>Metazoa</taxon>
        <taxon>Chordata</taxon>
        <taxon>Craniata</taxon>
        <taxon>Vertebrata</taxon>
        <taxon>Euteleostomi</taxon>
        <taxon>Mammalia</taxon>
        <taxon>Eutheria</taxon>
        <taxon>Euarchontoglires</taxon>
        <taxon>Primates</taxon>
        <taxon>Haplorrhini</taxon>
        <taxon>Catarrhini</taxon>
        <taxon>Hominidae</taxon>
        <taxon>Homo</taxon>
    </lineage>
</organism>
<accession>O75916</accession>
<accession>A8K3C0</accession>
<accession>O75573</accession>
<accession>Q696R2</accession>
<accession>Q8TD64</accession>
<accession>Q8TD65</accession>
<accession>Q9HC32</accession>
<accession>Q9HC33</accession>